<reference key="1">
    <citation type="journal article" date="2009" name="PLoS Genet.">
        <title>Organised genome dynamics in the Escherichia coli species results in highly diverse adaptive paths.</title>
        <authorList>
            <person name="Touchon M."/>
            <person name="Hoede C."/>
            <person name="Tenaillon O."/>
            <person name="Barbe V."/>
            <person name="Baeriswyl S."/>
            <person name="Bidet P."/>
            <person name="Bingen E."/>
            <person name="Bonacorsi S."/>
            <person name="Bouchier C."/>
            <person name="Bouvet O."/>
            <person name="Calteau A."/>
            <person name="Chiapello H."/>
            <person name="Clermont O."/>
            <person name="Cruveiller S."/>
            <person name="Danchin A."/>
            <person name="Diard M."/>
            <person name="Dossat C."/>
            <person name="Karoui M.E."/>
            <person name="Frapy E."/>
            <person name="Garry L."/>
            <person name="Ghigo J.M."/>
            <person name="Gilles A.M."/>
            <person name="Johnson J."/>
            <person name="Le Bouguenec C."/>
            <person name="Lescat M."/>
            <person name="Mangenot S."/>
            <person name="Martinez-Jehanne V."/>
            <person name="Matic I."/>
            <person name="Nassif X."/>
            <person name="Oztas S."/>
            <person name="Petit M.A."/>
            <person name="Pichon C."/>
            <person name="Rouy Z."/>
            <person name="Ruf C.S."/>
            <person name="Schneider D."/>
            <person name="Tourret J."/>
            <person name="Vacherie B."/>
            <person name="Vallenet D."/>
            <person name="Medigue C."/>
            <person name="Rocha E.P.C."/>
            <person name="Denamur E."/>
        </authorList>
    </citation>
    <scope>NUCLEOTIDE SEQUENCE [LARGE SCALE GENOMIC DNA]</scope>
    <source>
        <strain>S88 / ExPEC</strain>
    </source>
</reference>
<dbReference type="EMBL" id="CU928161">
    <property type="protein sequence ID" value="CAR03968.1"/>
    <property type="molecule type" value="Genomic_DNA"/>
</dbReference>
<dbReference type="RefSeq" id="WP_001196613.1">
    <property type="nucleotide sequence ID" value="NC_011742.1"/>
</dbReference>
<dbReference type="SMR" id="B7MIL6"/>
<dbReference type="GeneID" id="93774610"/>
<dbReference type="KEGG" id="ecz:ECS88_2702"/>
<dbReference type="HOGENOM" id="CLU_005965_2_1_6"/>
<dbReference type="Proteomes" id="UP000000747">
    <property type="component" value="Chromosome"/>
</dbReference>
<dbReference type="GO" id="GO:0005524">
    <property type="term" value="F:ATP binding"/>
    <property type="evidence" value="ECO:0007669"/>
    <property type="project" value="UniProtKB-KW"/>
</dbReference>
<dbReference type="GO" id="GO:0016887">
    <property type="term" value="F:ATP hydrolysis activity"/>
    <property type="evidence" value="ECO:0007669"/>
    <property type="project" value="UniProtKB-UniRule"/>
</dbReference>
<dbReference type="GO" id="GO:0140662">
    <property type="term" value="F:ATP-dependent protein folding chaperone"/>
    <property type="evidence" value="ECO:0007669"/>
    <property type="project" value="InterPro"/>
</dbReference>
<dbReference type="GO" id="GO:0051082">
    <property type="term" value="F:unfolded protein binding"/>
    <property type="evidence" value="ECO:0007669"/>
    <property type="project" value="InterPro"/>
</dbReference>
<dbReference type="GO" id="GO:0016226">
    <property type="term" value="P:iron-sulfur cluster assembly"/>
    <property type="evidence" value="ECO:0007669"/>
    <property type="project" value="InterPro"/>
</dbReference>
<dbReference type="CDD" id="cd10236">
    <property type="entry name" value="ASKHA_NBD_HSP70_HscA"/>
    <property type="match status" value="1"/>
</dbReference>
<dbReference type="FunFam" id="1.20.1270.10:FF:000006">
    <property type="entry name" value="Chaperone protein HscA"/>
    <property type="match status" value="1"/>
</dbReference>
<dbReference type="FunFam" id="3.30.420.40:FF:000046">
    <property type="entry name" value="Chaperone protein HscA"/>
    <property type="match status" value="1"/>
</dbReference>
<dbReference type="FunFam" id="3.90.640.10:FF:000013">
    <property type="entry name" value="Chaperone protein HscA"/>
    <property type="match status" value="1"/>
</dbReference>
<dbReference type="FunFam" id="2.60.34.10:FF:000005">
    <property type="entry name" value="Chaperone protein HscA homolog"/>
    <property type="match status" value="1"/>
</dbReference>
<dbReference type="FunFam" id="3.30.420.40:FF:000020">
    <property type="entry name" value="Chaperone protein HscA homolog"/>
    <property type="match status" value="1"/>
</dbReference>
<dbReference type="Gene3D" id="1.20.1270.10">
    <property type="match status" value="1"/>
</dbReference>
<dbReference type="Gene3D" id="3.30.420.40">
    <property type="match status" value="2"/>
</dbReference>
<dbReference type="Gene3D" id="3.90.640.10">
    <property type="entry name" value="Actin, Chain A, domain 4"/>
    <property type="match status" value="1"/>
</dbReference>
<dbReference type="Gene3D" id="2.60.34.10">
    <property type="entry name" value="Substrate Binding Domain Of DNAk, Chain A, domain 1"/>
    <property type="match status" value="1"/>
</dbReference>
<dbReference type="HAMAP" id="MF_00679">
    <property type="entry name" value="HscA"/>
    <property type="match status" value="1"/>
</dbReference>
<dbReference type="InterPro" id="IPR043129">
    <property type="entry name" value="ATPase_NBD"/>
</dbReference>
<dbReference type="InterPro" id="IPR018181">
    <property type="entry name" value="Heat_shock_70_CS"/>
</dbReference>
<dbReference type="InterPro" id="IPR042039">
    <property type="entry name" value="HscA_NBD"/>
</dbReference>
<dbReference type="InterPro" id="IPR029048">
    <property type="entry name" value="HSP70_C_sf"/>
</dbReference>
<dbReference type="InterPro" id="IPR029047">
    <property type="entry name" value="HSP70_peptide-bd_sf"/>
</dbReference>
<dbReference type="InterPro" id="IPR013126">
    <property type="entry name" value="Hsp_70_fam"/>
</dbReference>
<dbReference type="InterPro" id="IPR010236">
    <property type="entry name" value="ISC_FeS_clus_asmbl_HscA"/>
</dbReference>
<dbReference type="NCBIfam" id="TIGR01991">
    <property type="entry name" value="HscA"/>
    <property type="match status" value="1"/>
</dbReference>
<dbReference type="NCBIfam" id="NF003520">
    <property type="entry name" value="PRK05183.1"/>
    <property type="match status" value="1"/>
</dbReference>
<dbReference type="PANTHER" id="PTHR19375">
    <property type="entry name" value="HEAT SHOCK PROTEIN 70KDA"/>
    <property type="match status" value="1"/>
</dbReference>
<dbReference type="Pfam" id="PF00012">
    <property type="entry name" value="HSP70"/>
    <property type="match status" value="1"/>
</dbReference>
<dbReference type="PRINTS" id="PR00301">
    <property type="entry name" value="HEATSHOCK70"/>
</dbReference>
<dbReference type="SUPFAM" id="SSF53067">
    <property type="entry name" value="Actin-like ATPase domain"/>
    <property type="match status" value="2"/>
</dbReference>
<dbReference type="SUPFAM" id="SSF100934">
    <property type="entry name" value="Heat shock protein 70kD (HSP70), C-terminal subdomain"/>
    <property type="match status" value="1"/>
</dbReference>
<dbReference type="SUPFAM" id="SSF100920">
    <property type="entry name" value="Heat shock protein 70kD (HSP70), peptide-binding domain"/>
    <property type="match status" value="1"/>
</dbReference>
<dbReference type="PROSITE" id="PS00297">
    <property type="entry name" value="HSP70_1"/>
    <property type="match status" value="1"/>
</dbReference>
<dbReference type="PROSITE" id="PS00329">
    <property type="entry name" value="HSP70_2"/>
    <property type="match status" value="1"/>
</dbReference>
<dbReference type="PROSITE" id="PS01036">
    <property type="entry name" value="HSP70_3"/>
    <property type="match status" value="1"/>
</dbReference>
<feature type="chain" id="PRO_1000131672" description="Chaperone protein HscA">
    <location>
        <begin position="1"/>
        <end position="616"/>
    </location>
</feature>
<evidence type="ECO:0000255" key="1">
    <source>
        <dbReference type="HAMAP-Rule" id="MF_00679"/>
    </source>
</evidence>
<keyword id="KW-0067">ATP-binding</keyword>
<keyword id="KW-0143">Chaperone</keyword>
<keyword id="KW-0547">Nucleotide-binding</keyword>
<keyword id="KW-1185">Reference proteome</keyword>
<accession>B7MIL6</accession>
<gene>
    <name evidence="1" type="primary">hscA</name>
    <name type="ordered locus">ECS88_2702</name>
</gene>
<proteinExistence type="inferred from homology"/>
<comment type="function">
    <text evidence="1">Chaperone involved in the maturation of iron-sulfur cluster-containing proteins. Has a low intrinsic ATPase activity which is markedly stimulated by HscB. Involved in the maturation of IscU.</text>
</comment>
<comment type="similarity">
    <text evidence="1">Belongs to the heat shock protein 70 family.</text>
</comment>
<protein>
    <recommendedName>
        <fullName evidence="1">Chaperone protein HscA</fullName>
    </recommendedName>
    <alternativeName>
        <fullName evidence="1">Hsc66</fullName>
    </alternativeName>
</protein>
<name>HSCA_ECO45</name>
<sequence length="616" mass="65652">MALLQISEPGLSAAPHQRRLAAGIDLGTTNSLVATVRSGQAETLADHEGRHLLPSVVHYQQQGHSVGYDARTNAALDTANTISSVKRLMGRSLADIQQRYPHLPYQFQASENGLPMIETAAGLLNPVRVSADILKALAARATEALAGELDGVVITVPAYFDDAQRQGTKDAARLAGLHVLRLLNEPTAAAIAYGLDSGQEGVIAVYDLGGGTFDISILRLSRGVFEVLATGGDSALGGDDFDHLLADYIREQAGIPDRSDNRVQRELLDAAIAAKIALSDADSVTVNVAGWQGEISREQFNELIAPLVKRTLLACRRALKDAGVEADEVLEVVMVGGSTRVPLVRERVGEFFGRPPLTSIDPDKVVAIGAAIQADILVGNKPDSEMLLLDVIPLSLGLETMGGLVEKVIPRNTTIPVARAQDFTTFKDGQTAMSIHVMQGERELVQDCRSLARFALRGIPALPAGGAHIRVTFQVDADGLLSVTAMEKSTGVEASIQVKPSYGLTDSEIASMIKDSMSYAEQDVKARMLAEQKVEAARVLESLHGALAADAALLSAAERQVIDDAAAHLSEVAQGDDVDAIEQAIKNVDKQTQDFAARRMDQSVRRALKGHSVDEV</sequence>
<organism>
    <name type="scientific">Escherichia coli O45:K1 (strain S88 / ExPEC)</name>
    <dbReference type="NCBI Taxonomy" id="585035"/>
    <lineage>
        <taxon>Bacteria</taxon>
        <taxon>Pseudomonadati</taxon>
        <taxon>Pseudomonadota</taxon>
        <taxon>Gammaproteobacteria</taxon>
        <taxon>Enterobacterales</taxon>
        <taxon>Enterobacteriaceae</taxon>
        <taxon>Escherichia</taxon>
    </lineage>
</organism>